<organism>
    <name type="scientific">Xanthomonas euvesicatoria pv. vesicatoria (strain 85-10)</name>
    <name type="common">Xanthomonas campestris pv. vesicatoria</name>
    <dbReference type="NCBI Taxonomy" id="316273"/>
    <lineage>
        <taxon>Bacteria</taxon>
        <taxon>Pseudomonadati</taxon>
        <taxon>Pseudomonadota</taxon>
        <taxon>Gammaproteobacteria</taxon>
        <taxon>Lysobacterales</taxon>
        <taxon>Lysobacteraceae</taxon>
        <taxon>Xanthomonas</taxon>
    </lineage>
</organism>
<feature type="chain" id="PRO_0000236377" description="Thiazole synthase">
    <location>
        <begin position="1"/>
        <end position="264"/>
    </location>
</feature>
<feature type="active site" description="Schiff-base intermediate with DXP" evidence="1">
    <location>
        <position position="106"/>
    </location>
</feature>
<feature type="binding site" evidence="1">
    <location>
        <position position="167"/>
    </location>
    <ligand>
        <name>1-deoxy-D-xylulose 5-phosphate</name>
        <dbReference type="ChEBI" id="CHEBI:57792"/>
    </ligand>
</feature>
<feature type="binding site" evidence="1">
    <location>
        <begin position="193"/>
        <end position="194"/>
    </location>
    <ligand>
        <name>1-deoxy-D-xylulose 5-phosphate</name>
        <dbReference type="ChEBI" id="CHEBI:57792"/>
    </ligand>
</feature>
<feature type="binding site" evidence="1">
    <location>
        <begin position="215"/>
        <end position="216"/>
    </location>
    <ligand>
        <name>1-deoxy-D-xylulose 5-phosphate</name>
        <dbReference type="ChEBI" id="CHEBI:57792"/>
    </ligand>
</feature>
<proteinExistence type="inferred from homology"/>
<reference key="1">
    <citation type="journal article" date="2005" name="J. Bacteriol.">
        <title>Insights into genome plasticity and pathogenicity of the plant pathogenic Bacterium Xanthomonas campestris pv. vesicatoria revealed by the complete genome sequence.</title>
        <authorList>
            <person name="Thieme F."/>
            <person name="Koebnik R."/>
            <person name="Bekel T."/>
            <person name="Berger C."/>
            <person name="Boch J."/>
            <person name="Buettner D."/>
            <person name="Caldana C."/>
            <person name="Gaigalat L."/>
            <person name="Goesmann A."/>
            <person name="Kay S."/>
            <person name="Kirchner O."/>
            <person name="Lanz C."/>
            <person name="Linke B."/>
            <person name="McHardy A.C."/>
            <person name="Meyer F."/>
            <person name="Mittenhuber G."/>
            <person name="Nies D.H."/>
            <person name="Niesbach-Kloesgen U."/>
            <person name="Patschkowski T."/>
            <person name="Rueckert C."/>
            <person name="Rupp O."/>
            <person name="Schneiker S."/>
            <person name="Schuster S.C."/>
            <person name="Vorhoelter F.J."/>
            <person name="Weber E."/>
            <person name="Puehler A."/>
            <person name="Bonas U."/>
            <person name="Bartels D."/>
            <person name="Kaiser O."/>
        </authorList>
    </citation>
    <scope>NUCLEOTIDE SEQUENCE [LARGE SCALE GENOMIC DNA]</scope>
    <source>
        <strain>85-10</strain>
    </source>
</reference>
<evidence type="ECO:0000255" key="1">
    <source>
        <dbReference type="HAMAP-Rule" id="MF_00443"/>
    </source>
</evidence>
<accession>Q3BQ15</accession>
<dbReference type="EC" id="2.8.1.10" evidence="1"/>
<dbReference type="EMBL" id="AM039952">
    <property type="protein sequence ID" value="CAJ25148.1"/>
    <property type="molecule type" value="Genomic_DNA"/>
</dbReference>
<dbReference type="RefSeq" id="WP_011348384.1">
    <property type="nucleotide sequence ID" value="NZ_CP017190.1"/>
</dbReference>
<dbReference type="SMR" id="Q3BQ15"/>
<dbReference type="STRING" id="456327.BJD11_05650"/>
<dbReference type="KEGG" id="xcv:XCV3417"/>
<dbReference type="eggNOG" id="COG2022">
    <property type="taxonomic scope" value="Bacteria"/>
</dbReference>
<dbReference type="HOGENOM" id="CLU_062233_1_0_6"/>
<dbReference type="UniPathway" id="UPA00060"/>
<dbReference type="Proteomes" id="UP000007069">
    <property type="component" value="Chromosome"/>
</dbReference>
<dbReference type="GO" id="GO:0005737">
    <property type="term" value="C:cytoplasm"/>
    <property type="evidence" value="ECO:0007669"/>
    <property type="project" value="UniProtKB-SubCell"/>
</dbReference>
<dbReference type="GO" id="GO:1990107">
    <property type="term" value="F:thiazole synthase activity"/>
    <property type="evidence" value="ECO:0007669"/>
    <property type="project" value="UniProtKB-EC"/>
</dbReference>
<dbReference type="GO" id="GO:0009229">
    <property type="term" value="P:thiamine diphosphate biosynthetic process"/>
    <property type="evidence" value="ECO:0007669"/>
    <property type="project" value="UniProtKB-UniRule"/>
</dbReference>
<dbReference type="CDD" id="cd04728">
    <property type="entry name" value="ThiG"/>
    <property type="match status" value="1"/>
</dbReference>
<dbReference type="FunFam" id="3.20.20.70:FF:000049">
    <property type="entry name" value="Thiazole synthase"/>
    <property type="match status" value="1"/>
</dbReference>
<dbReference type="Gene3D" id="3.20.20.70">
    <property type="entry name" value="Aldolase class I"/>
    <property type="match status" value="1"/>
</dbReference>
<dbReference type="HAMAP" id="MF_00443">
    <property type="entry name" value="ThiG"/>
    <property type="match status" value="1"/>
</dbReference>
<dbReference type="InterPro" id="IPR013785">
    <property type="entry name" value="Aldolase_TIM"/>
</dbReference>
<dbReference type="InterPro" id="IPR033983">
    <property type="entry name" value="Thiazole_synthase_ThiG"/>
</dbReference>
<dbReference type="InterPro" id="IPR008867">
    <property type="entry name" value="ThiG"/>
</dbReference>
<dbReference type="PANTHER" id="PTHR34266">
    <property type="entry name" value="THIAZOLE SYNTHASE"/>
    <property type="match status" value="1"/>
</dbReference>
<dbReference type="PANTHER" id="PTHR34266:SF2">
    <property type="entry name" value="THIAZOLE SYNTHASE"/>
    <property type="match status" value="1"/>
</dbReference>
<dbReference type="Pfam" id="PF05690">
    <property type="entry name" value="ThiG"/>
    <property type="match status" value="1"/>
</dbReference>
<dbReference type="SUPFAM" id="SSF110399">
    <property type="entry name" value="ThiG-like"/>
    <property type="match status" value="1"/>
</dbReference>
<keyword id="KW-0963">Cytoplasm</keyword>
<keyword id="KW-0704">Schiff base</keyword>
<keyword id="KW-0784">Thiamine biosynthesis</keyword>
<keyword id="KW-0808">Transferase</keyword>
<gene>
    <name evidence="1" type="primary">thiG</name>
    <name type="ordered locus">XCV3417</name>
</gene>
<sequence>MTNPAPSDALVIAGKHYRSRLLTGTGKFKDLDETRLATEAAAAEIVTVAIRRVNIGQDPNAPSLLDVLPPERYTLLPNTAGCYTAEEAVRTCRLARELLDGHNLTKLEVLGDEKTLYPDVVQTLKAAEQLVADGFEVMVYTSDDPILAKRLEEIGCVAVMPLAAPIGSGLGIQNKYNLLEIIDNAKVPIIVDAGVGTASDAAIAMELGCDGVLMNTAIAGARDPILMASAMRKAIEAGREAFLAGRIPRKRYASASSPVDGVIG</sequence>
<comment type="function">
    <text evidence="1">Catalyzes the rearrangement of 1-deoxy-D-xylulose 5-phosphate (DXP) to produce the thiazole phosphate moiety of thiamine. Sulfur is provided by the thiocarboxylate moiety of the carrier protein ThiS. In vitro, sulfur can be provided by H(2)S.</text>
</comment>
<comment type="catalytic activity">
    <reaction evidence="1">
        <text>[ThiS sulfur-carrier protein]-C-terminal-Gly-aminoethanethioate + 2-iminoacetate + 1-deoxy-D-xylulose 5-phosphate = [ThiS sulfur-carrier protein]-C-terminal Gly-Gly + 2-[(2R,5Z)-2-carboxy-4-methylthiazol-5(2H)-ylidene]ethyl phosphate + 2 H2O + H(+)</text>
        <dbReference type="Rhea" id="RHEA:26297"/>
        <dbReference type="Rhea" id="RHEA-COMP:12909"/>
        <dbReference type="Rhea" id="RHEA-COMP:19908"/>
        <dbReference type="ChEBI" id="CHEBI:15377"/>
        <dbReference type="ChEBI" id="CHEBI:15378"/>
        <dbReference type="ChEBI" id="CHEBI:57792"/>
        <dbReference type="ChEBI" id="CHEBI:62899"/>
        <dbReference type="ChEBI" id="CHEBI:77846"/>
        <dbReference type="ChEBI" id="CHEBI:90778"/>
        <dbReference type="ChEBI" id="CHEBI:232372"/>
        <dbReference type="EC" id="2.8.1.10"/>
    </reaction>
</comment>
<comment type="pathway">
    <text evidence="1">Cofactor biosynthesis; thiamine diphosphate biosynthesis.</text>
</comment>
<comment type="subunit">
    <text evidence="1">Homotetramer. Forms heterodimers with either ThiH or ThiS.</text>
</comment>
<comment type="subcellular location">
    <subcellularLocation>
        <location evidence="1">Cytoplasm</location>
    </subcellularLocation>
</comment>
<comment type="similarity">
    <text evidence="1">Belongs to the ThiG family.</text>
</comment>
<protein>
    <recommendedName>
        <fullName evidence="1">Thiazole synthase</fullName>
        <ecNumber evidence="1">2.8.1.10</ecNumber>
    </recommendedName>
</protein>
<name>THIG_XANE5</name>